<feature type="chain" id="PRO_0000251684" description="Large ribosomal subunit protein uL16">
    <location>
        <begin position="1"/>
        <end position="158"/>
    </location>
</feature>
<feature type="region of interest" description="Disordered" evidence="2">
    <location>
        <begin position="1"/>
        <end position="22"/>
    </location>
</feature>
<dbReference type="EMBL" id="CP000239">
    <property type="protein sequence ID" value="ABC99359.1"/>
    <property type="molecule type" value="Genomic_DNA"/>
</dbReference>
<dbReference type="RefSeq" id="WP_011430040.1">
    <property type="nucleotide sequence ID" value="NC_007775.1"/>
</dbReference>
<dbReference type="SMR" id="Q2JV88"/>
<dbReference type="STRING" id="321327.CYA_1171"/>
<dbReference type="KEGG" id="cya:CYA_1171"/>
<dbReference type="eggNOG" id="COG0197">
    <property type="taxonomic scope" value="Bacteria"/>
</dbReference>
<dbReference type="HOGENOM" id="CLU_078858_2_1_3"/>
<dbReference type="OrthoDB" id="9802589at2"/>
<dbReference type="Proteomes" id="UP000008818">
    <property type="component" value="Chromosome"/>
</dbReference>
<dbReference type="GO" id="GO:0022625">
    <property type="term" value="C:cytosolic large ribosomal subunit"/>
    <property type="evidence" value="ECO:0007669"/>
    <property type="project" value="TreeGrafter"/>
</dbReference>
<dbReference type="GO" id="GO:0019843">
    <property type="term" value="F:rRNA binding"/>
    <property type="evidence" value="ECO:0007669"/>
    <property type="project" value="UniProtKB-UniRule"/>
</dbReference>
<dbReference type="GO" id="GO:0003735">
    <property type="term" value="F:structural constituent of ribosome"/>
    <property type="evidence" value="ECO:0007669"/>
    <property type="project" value="InterPro"/>
</dbReference>
<dbReference type="GO" id="GO:0000049">
    <property type="term" value="F:tRNA binding"/>
    <property type="evidence" value="ECO:0007669"/>
    <property type="project" value="UniProtKB-KW"/>
</dbReference>
<dbReference type="GO" id="GO:0006412">
    <property type="term" value="P:translation"/>
    <property type="evidence" value="ECO:0007669"/>
    <property type="project" value="UniProtKB-UniRule"/>
</dbReference>
<dbReference type="CDD" id="cd01433">
    <property type="entry name" value="Ribosomal_L16_L10e"/>
    <property type="match status" value="1"/>
</dbReference>
<dbReference type="FunFam" id="3.90.1170.10:FF:000001">
    <property type="entry name" value="50S ribosomal protein L16"/>
    <property type="match status" value="1"/>
</dbReference>
<dbReference type="Gene3D" id="3.90.1170.10">
    <property type="entry name" value="Ribosomal protein L10e/L16"/>
    <property type="match status" value="1"/>
</dbReference>
<dbReference type="HAMAP" id="MF_01342">
    <property type="entry name" value="Ribosomal_uL16"/>
    <property type="match status" value="1"/>
</dbReference>
<dbReference type="InterPro" id="IPR047873">
    <property type="entry name" value="Ribosomal_uL16"/>
</dbReference>
<dbReference type="InterPro" id="IPR000114">
    <property type="entry name" value="Ribosomal_uL16_bact-type"/>
</dbReference>
<dbReference type="InterPro" id="IPR020798">
    <property type="entry name" value="Ribosomal_uL16_CS"/>
</dbReference>
<dbReference type="InterPro" id="IPR016180">
    <property type="entry name" value="Ribosomal_uL16_dom"/>
</dbReference>
<dbReference type="InterPro" id="IPR036920">
    <property type="entry name" value="Ribosomal_uL16_sf"/>
</dbReference>
<dbReference type="NCBIfam" id="TIGR01164">
    <property type="entry name" value="rplP_bact"/>
    <property type="match status" value="1"/>
</dbReference>
<dbReference type="PANTHER" id="PTHR12220">
    <property type="entry name" value="50S/60S RIBOSOMAL PROTEIN L16"/>
    <property type="match status" value="1"/>
</dbReference>
<dbReference type="PANTHER" id="PTHR12220:SF13">
    <property type="entry name" value="LARGE RIBOSOMAL SUBUNIT PROTEIN UL16M"/>
    <property type="match status" value="1"/>
</dbReference>
<dbReference type="Pfam" id="PF00252">
    <property type="entry name" value="Ribosomal_L16"/>
    <property type="match status" value="1"/>
</dbReference>
<dbReference type="PRINTS" id="PR00060">
    <property type="entry name" value="RIBOSOMALL16"/>
</dbReference>
<dbReference type="SUPFAM" id="SSF54686">
    <property type="entry name" value="Ribosomal protein L16p/L10e"/>
    <property type="match status" value="1"/>
</dbReference>
<dbReference type="PROSITE" id="PS00586">
    <property type="entry name" value="RIBOSOMAL_L16_1"/>
    <property type="match status" value="1"/>
</dbReference>
<dbReference type="PROSITE" id="PS00701">
    <property type="entry name" value="RIBOSOMAL_L16_2"/>
    <property type="match status" value="1"/>
</dbReference>
<proteinExistence type="inferred from homology"/>
<accession>Q2JV88</accession>
<sequence length="158" mass="17784">MLSPKRTKYRKQQRGRMKGKATRGNRINFGEYGLVALEPAWITARQIEASRRAMARYVRRGGQIWIRIFPDKPVTQRPAETRMGSGKGNPEYWVCVVKPGRILFEMGGVPEATAREAMRLAAQKLPIKVKFVTKANFEEPEPVQKAAPETTEVAASAI</sequence>
<evidence type="ECO:0000255" key="1">
    <source>
        <dbReference type="HAMAP-Rule" id="MF_01342"/>
    </source>
</evidence>
<evidence type="ECO:0000256" key="2">
    <source>
        <dbReference type="SAM" id="MobiDB-lite"/>
    </source>
</evidence>
<evidence type="ECO:0000305" key="3"/>
<gene>
    <name evidence="1" type="primary">rplP</name>
    <name evidence="1" type="synonym">rpl16</name>
    <name type="ordered locus">CYA_1171</name>
</gene>
<comment type="function">
    <text evidence="1">Binds 23S rRNA and is also seen to make contacts with the A and possibly P site tRNAs.</text>
</comment>
<comment type="subunit">
    <text evidence="1">Part of the 50S ribosomal subunit.</text>
</comment>
<comment type="similarity">
    <text evidence="1">Belongs to the universal ribosomal protein uL16 family.</text>
</comment>
<organism>
    <name type="scientific">Synechococcus sp. (strain JA-3-3Ab)</name>
    <name type="common">Cyanobacteria bacterium Yellowstone A-Prime</name>
    <dbReference type="NCBI Taxonomy" id="321327"/>
    <lineage>
        <taxon>Bacteria</taxon>
        <taxon>Bacillati</taxon>
        <taxon>Cyanobacteriota</taxon>
        <taxon>Cyanophyceae</taxon>
        <taxon>Synechococcales</taxon>
        <taxon>Synechococcaceae</taxon>
        <taxon>Synechococcus</taxon>
    </lineage>
</organism>
<name>RL16_SYNJA</name>
<keyword id="KW-0687">Ribonucleoprotein</keyword>
<keyword id="KW-0689">Ribosomal protein</keyword>
<keyword id="KW-0694">RNA-binding</keyword>
<keyword id="KW-0699">rRNA-binding</keyword>
<keyword id="KW-0820">tRNA-binding</keyword>
<protein>
    <recommendedName>
        <fullName evidence="1">Large ribosomal subunit protein uL16</fullName>
    </recommendedName>
    <alternativeName>
        <fullName evidence="3">50S ribosomal protein L16</fullName>
    </alternativeName>
</protein>
<reference key="1">
    <citation type="journal article" date="2007" name="ISME J.">
        <title>Population level functional diversity in a microbial community revealed by comparative genomic and metagenomic analyses.</title>
        <authorList>
            <person name="Bhaya D."/>
            <person name="Grossman A.R."/>
            <person name="Steunou A.-S."/>
            <person name="Khuri N."/>
            <person name="Cohan F.M."/>
            <person name="Hamamura N."/>
            <person name="Melendrez M.C."/>
            <person name="Bateson M.M."/>
            <person name="Ward D.M."/>
            <person name="Heidelberg J.F."/>
        </authorList>
    </citation>
    <scope>NUCLEOTIDE SEQUENCE [LARGE SCALE GENOMIC DNA]</scope>
    <source>
        <strain>JA-3-3Ab</strain>
    </source>
</reference>